<accession>A6VQT5</accession>
<reference key="1">
    <citation type="journal article" date="2010" name="BMC Genomics">
        <title>A genomic perspective on the potential of Actinobacillus succinogenes for industrial succinate production.</title>
        <authorList>
            <person name="McKinlay J.B."/>
            <person name="Laivenieks M."/>
            <person name="Schindler B.D."/>
            <person name="McKinlay A.A."/>
            <person name="Siddaramappa S."/>
            <person name="Challacombe J.F."/>
            <person name="Lowry S.R."/>
            <person name="Clum A."/>
            <person name="Lapidus A.L."/>
            <person name="Burkhart K.B."/>
            <person name="Harkins V."/>
            <person name="Vieille C."/>
        </authorList>
    </citation>
    <scope>NUCLEOTIDE SEQUENCE [LARGE SCALE GENOMIC DNA]</scope>
    <source>
        <strain>ATCC 55618 / DSM 22257 / CCUG 43843 / 130Z</strain>
    </source>
</reference>
<evidence type="ECO:0000255" key="1">
    <source>
        <dbReference type="HAMAP-Rule" id="MF_00521"/>
    </source>
</evidence>
<gene>
    <name evidence="1" type="primary">kdkA</name>
    <name type="ordered locus">Asuc_1985</name>
</gene>
<organism>
    <name type="scientific">Actinobacillus succinogenes (strain ATCC 55618 / DSM 22257 / CCUG 43843 / 130Z)</name>
    <dbReference type="NCBI Taxonomy" id="339671"/>
    <lineage>
        <taxon>Bacteria</taxon>
        <taxon>Pseudomonadati</taxon>
        <taxon>Pseudomonadota</taxon>
        <taxon>Gammaproteobacteria</taxon>
        <taxon>Pasteurellales</taxon>
        <taxon>Pasteurellaceae</taxon>
        <taxon>Actinobacillus</taxon>
    </lineage>
</organism>
<keyword id="KW-0067">ATP-binding</keyword>
<keyword id="KW-0997">Cell inner membrane</keyword>
<keyword id="KW-1003">Cell membrane</keyword>
<keyword id="KW-0418">Kinase</keyword>
<keyword id="KW-0448">Lipopolysaccharide biosynthesis</keyword>
<keyword id="KW-0472">Membrane</keyword>
<keyword id="KW-0547">Nucleotide-binding</keyword>
<keyword id="KW-1185">Reference proteome</keyword>
<keyword id="KW-0808">Transferase</keyword>
<comment type="function">
    <text evidence="1">Catalyzes the ATP-dependent phosphorylation of the 3-deoxy-D-manno-octulosonic acid (Kdo) residue in Kdo-lipid IV(A) at the 4-OH position.</text>
</comment>
<comment type="catalytic activity">
    <reaction evidence="1">
        <text>an alpha-Kdo-(2-&gt;6)-lipid IVA + ATP = a 4-O-phospho-alpha-Kdo-(2-&gt;6)-lipid IVA + ADP + H(+)</text>
        <dbReference type="Rhea" id="RHEA:74271"/>
        <dbReference type="ChEBI" id="CHEBI:15378"/>
        <dbReference type="ChEBI" id="CHEBI:30616"/>
        <dbReference type="ChEBI" id="CHEBI:176428"/>
        <dbReference type="ChEBI" id="CHEBI:193140"/>
        <dbReference type="ChEBI" id="CHEBI:456216"/>
        <dbReference type="EC" id="2.7.1.166"/>
    </reaction>
</comment>
<comment type="pathway">
    <text evidence="1">Bacterial outer membrane biogenesis; LPS core biosynthesis.</text>
</comment>
<comment type="subcellular location">
    <subcellularLocation>
        <location evidence="1">Cell inner membrane</location>
        <topology evidence="1">Peripheral membrane protein</topology>
        <orientation evidence="1">Cytoplasmic side</orientation>
    </subcellularLocation>
</comment>
<comment type="similarity">
    <text evidence="1">Belongs to the protein kinase superfamily. KdkA/RfaP family.</text>
</comment>
<sequence>MLEIRQNHCFYLFNWDEPRQDQTRFFSPEFWRRQGRISGTAQGRGITWFLQTVDLFGVNAALRHYYRGGLWGKINRDRYTFTSLENTRSFAEFRLLSRLHQAGMPVPKPLAAKVEKLSLGGYRADILTEKVENARDLTALLQTENLSDEAWRQIGKLIRRLHDLQICHTDLNAHNILVQQVKEQEKYWLLDFDKCGEKSGDFWKAQNLARLKRSFLKEAARMGIRFTEGDWKNLLKGYQN</sequence>
<protein>
    <recommendedName>
        <fullName evidence="1">3-deoxy-D-manno-octulosonic acid kinase</fullName>
        <shortName evidence="1">Kdo kinase</shortName>
        <ecNumber evidence="1">2.7.1.166</ecNumber>
    </recommendedName>
</protein>
<proteinExistence type="inferred from homology"/>
<name>KDKA_ACTSZ</name>
<dbReference type="EC" id="2.7.1.166" evidence="1"/>
<dbReference type="EMBL" id="CP000746">
    <property type="protein sequence ID" value="ABR75332.1"/>
    <property type="molecule type" value="Genomic_DNA"/>
</dbReference>
<dbReference type="RefSeq" id="WP_012073709.1">
    <property type="nucleotide sequence ID" value="NC_009655.1"/>
</dbReference>
<dbReference type="SMR" id="A6VQT5"/>
<dbReference type="STRING" id="339671.Asuc_1985"/>
<dbReference type="KEGG" id="asu:Asuc_1985"/>
<dbReference type="eggNOG" id="COG3642">
    <property type="taxonomic scope" value="Bacteria"/>
</dbReference>
<dbReference type="HOGENOM" id="CLU_094226_0_0_6"/>
<dbReference type="OrthoDB" id="6854449at2"/>
<dbReference type="UniPathway" id="UPA00958"/>
<dbReference type="Proteomes" id="UP000001114">
    <property type="component" value="Chromosome"/>
</dbReference>
<dbReference type="GO" id="GO:0005886">
    <property type="term" value="C:plasma membrane"/>
    <property type="evidence" value="ECO:0007669"/>
    <property type="project" value="UniProtKB-SubCell"/>
</dbReference>
<dbReference type="GO" id="GO:0005524">
    <property type="term" value="F:ATP binding"/>
    <property type="evidence" value="ECO:0007669"/>
    <property type="project" value="UniProtKB-UniRule"/>
</dbReference>
<dbReference type="GO" id="GO:0016301">
    <property type="term" value="F:kinase activity"/>
    <property type="evidence" value="ECO:0007669"/>
    <property type="project" value="UniProtKB-KW"/>
</dbReference>
<dbReference type="GO" id="GO:0016773">
    <property type="term" value="F:phosphotransferase activity, alcohol group as acceptor"/>
    <property type="evidence" value="ECO:0007669"/>
    <property type="project" value="UniProtKB-UniRule"/>
</dbReference>
<dbReference type="GO" id="GO:0009244">
    <property type="term" value="P:lipopolysaccharide core region biosynthetic process"/>
    <property type="evidence" value="ECO:0007669"/>
    <property type="project" value="UniProtKB-UniRule"/>
</dbReference>
<dbReference type="Gene3D" id="1.10.510.10">
    <property type="entry name" value="Transferase(Phosphotransferase) domain 1"/>
    <property type="match status" value="1"/>
</dbReference>
<dbReference type="HAMAP" id="MF_00521">
    <property type="entry name" value="KDO_kinase"/>
    <property type="match status" value="1"/>
</dbReference>
<dbReference type="InterPro" id="IPR022826">
    <property type="entry name" value="KDO_kinase"/>
</dbReference>
<dbReference type="InterPro" id="IPR011009">
    <property type="entry name" value="Kinase-like_dom_sf"/>
</dbReference>
<dbReference type="NCBIfam" id="NF002475">
    <property type="entry name" value="PRK01723.1"/>
    <property type="match status" value="1"/>
</dbReference>
<dbReference type="Pfam" id="PF06293">
    <property type="entry name" value="Kdo"/>
    <property type="match status" value="1"/>
</dbReference>
<dbReference type="SUPFAM" id="SSF56112">
    <property type="entry name" value="Protein kinase-like (PK-like)"/>
    <property type="match status" value="1"/>
</dbReference>
<feature type="chain" id="PRO_1000072491" description="3-deoxy-D-manno-octulosonic acid kinase">
    <location>
        <begin position="1"/>
        <end position="240"/>
    </location>
</feature>
<feature type="active site" evidence="1">
    <location>
        <position position="170"/>
    </location>
</feature>